<keyword id="KW-0217">Developmental protein</keyword>
<keyword id="KW-1017">Isopeptide bond</keyword>
<keyword id="KW-0440">LIM domain</keyword>
<keyword id="KW-0479">Metal-binding</keyword>
<keyword id="KW-1185">Reference proteome</keyword>
<keyword id="KW-0677">Repeat</keyword>
<keyword id="KW-0832">Ubl conjugation</keyword>
<keyword id="KW-0862">Zinc</keyword>
<reference key="1">
    <citation type="journal article" date="2000" name="Nature">
        <title>Sequence and analysis of chromosome 1 of the plant Arabidopsis thaliana.</title>
        <authorList>
            <person name="Theologis A."/>
            <person name="Ecker J.R."/>
            <person name="Palm C.J."/>
            <person name="Federspiel N.A."/>
            <person name="Kaul S."/>
            <person name="White O."/>
            <person name="Alonso J."/>
            <person name="Altafi H."/>
            <person name="Araujo R."/>
            <person name="Bowman C.L."/>
            <person name="Brooks S.Y."/>
            <person name="Buehler E."/>
            <person name="Chan A."/>
            <person name="Chao Q."/>
            <person name="Chen H."/>
            <person name="Cheuk R.F."/>
            <person name="Chin C.W."/>
            <person name="Chung M.K."/>
            <person name="Conn L."/>
            <person name="Conway A.B."/>
            <person name="Conway A.R."/>
            <person name="Creasy T.H."/>
            <person name="Dewar K."/>
            <person name="Dunn P."/>
            <person name="Etgu P."/>
            <person name="Feldblyum T.V."/>
            <person name="Feng J.-D."/>
            <person name="Fong B."/>
            <person name="Fujii C.Y."/>
            <person name="Gill J.E."/>
            <person name="Goldsmith A.D."/>
            <person name="Haas B."/>
            <person name="Hansen N.F."/>
            <person name="Hughes B."/>
            <person name="Huizar L."/>
            <person name="Hunter J.L."/>
            <person name="Jenkins J."/>
            <person name="Johnson-Hopson C."/>
            <person name="Khan S."/>
            <person name="Khaykin E."/>
            <person name="Kim C.J."/>
            <person name="Koo H.L."/>
            <person name="Kremenetskaia I."/>
            <person name="Kurtz D.B."/>
            <person name="Kwan A."/>
            <person name="Lam B."/>
            <person name="Langin-Hooper S."/>
            <person name="Lee A."/>
            <person name="Lee J.M."/>
            <person name="Lenz C.A."/>
            <person name="Li J.H."/>
            <person name="Li Y.-P."/>
            <person name="Lin X."/>
            <person name="Liu S.X."/>
            <person name="Liu Z.A."/>
            <person name="Luros J.S."/>
            <person name="Maiti R."/>
            <person name="Marziali A."/>
            <person name="Militscher J."/>
            <person name="Miranda M."/>
            <person name="Nguyen M."/>
            <person name="Nierman W.C."/>
            <person name="Osborne B.I."/>
            <person name="Pai G."/>
            <person name="Peterson J."/>
            <person name="Pham P.K."/>
            <person name="Rizzo M."/>
            <person name="Rooney T."/>
            <person name="Rowley D."/>
            <person name="Sakano H."/>
            <person name="Salzberg S.L."/>
            <person name="Schwartz J.R."/>
            <person name="Shinn P."/>
            <person name="Southwick A.M."/>
            <person name="Sun H."/>
            <person name="Tallon L.J."/>
            <person name="Tambunga G."/>
            <person name="Toriumi M.J."/>
            <person name="Town C.D."/>
            <person name="Utterback T."/>
            <person name="Van Aken S."/>
            <person name="Vaysberg M."/>
            <person name="Vysotskaia V.S."/>
            <person name="Walker M."/>
            <person name="Wu D."/>
            <person name="Yu G."/>
            <person name="Fraser C.M."/>
            <person name="Venter J.C."/>
            <person name="Davis R.W."/>
        </authorList>
    </citation>
    <scope>NUCLEOTIDE SEQUENCE [LARGE SCALE GENOMIC DNA]</scope>
    <source>
        <strain>cv. Columbia</strain>
    </source>
</reference>
<reference key="2">
    <citation type="journal article" date="2017" name="Plant J.">
        <title>Araport11: a complete reannotation of the Arabidopsis thaliana reference genome.</title>
        <authorList>
            <person name="Cheng C.Y."/>
            <person name="Krishnakumar V."/>
            <person name="Chan A.P."/>
            <person name="Thibaud-Nissen F."/>
            <person name="Schobel S."/>
            <person name="Town C.D."/>
        </authorList>
    </citation>
    <scope>GENOME REANNOTATION</scope>
    <source>
        <strain>cv. Columbia</strain>
    </source>
</reference>
<reference key="3">
    <citation type="journal article" date="2004" name="Genome Res.">
        <title>Whole genome sequence comparisons and 'full-length' cDNA sequences: a combined approach to evaluate and improve Arabidopsis genome annotation.</title>
        <authorList>
            <person name="Castelli V."/>
            <person name="Aury J.-M."/>
            <person name="Jaillon O."/>
            <person name="Wincker P."/>
            <person name="Clepet C."/>
            <person name="Menard M."/>
            <person name="Cruaud C."/>
            <person name="Quetier F."/>
            <person name="Scarpelli C."/>
            <person name="Schaechter V."/>
            <person name="Temple G."/>
            <person name="Caboche M."/>
            <person name="Weissenbach J."/>
            <person name="Salanoubat M."/>
        </authorList>
    </citation>
    <scope>NUCLEOTIDE SEQUENCE [LARGE SCALE MRNA]</scope>
    <source>
        <strain>cv. Columbia</strain>
    </source>
</reference>
<reference key="4">
    <citation type="journal article" date="2008" name="Genes Dev.">
        <title>Control of final seed and organ size by the DA1 gene family in Arabidopsis thaliana.</title>
        <authorList>
            <person name="Li Y."/>
            <person name="Zheng L."/>
            <person name="Corke F."/>
            <person name="Smith C."/>
            <person name="Bevan M.W."/>
        </authorList>
    </citation>
    <scope>FUNCTION</scope>
    <scope>MUTAGENESIS OF ARG-358 AND LEU-362</scope>
    <scope>DISRUPTION PHENOTYPE</scope>
    <scope>INDUCTION BY ABA</scope>
    <scope>DEVELOPMENTAL STAGE</scope>
    <scope>INTERACTION WITH UBIQUITIN</scope>
    <scope>GENE FAMILY</scope>
    <scope>NOMENCLATURE</scope>
</reference>
<reference key="5">
    <citation type="journal article" date="2013" name="Plant Cell">
        <title>The ubiquitin receptor DA1 interacts with the E3 ubiquitin ligase DA2 to regulate seed and organ size in Arabidopsis.</title>
        <authorList>
            <person name="Xia T."/>
            <person name="Li N."/>
            <person name="Dumenil J."/>
            <person name="Li J."/>
            <person name="Kamenski A."/>
            <person name="Bevan M.W."/>
            <person name="Gao F."/>
            <person name="Li Y."/>
        </authorList>
    </citation>
    <scope>FUNCTION</scope>
    <scope>INTERACTION WITH DA2</scope>
</reference>
<reference key="6">
    <citation type="journal article" date="2014" name="Plant Cell">
        <title>The ubiquitin receptor DA1 regulates seed and organ size by modulating the stability of the ubiquitin-specific protease UBP15/SOD2 in Arabidopsis.</title>
        <authorList>
            <person name="Du L."/>
            <person name="Li N."/>
            <person name="Chen L."/>
            <person name="Xu Y."/>
            <person name="Li Y."/>
            <person name="Zhang Y."/>
            <person name="Li C."/>
            <person name="Li Y."/>
        </authorList>
    </citation>
    <scope>FUNCTION</scope>
    <scope>INTERACTION WITH UBP15</scope>
</reference>
<reference key="7">
    <citation type="journal article" date="2015" name="Plant Cell">
        <title>The ubiquitin receptors DA1, DAR1, and DAR2 redundantly regulate endoreduplication by modulating the stability of TCP14/15 in Arabidopsis.</title>
        <authorList>
            <person name="Peng Y."/>
            <person name="Chen L."/>
            <person name="Lu Y."/>
            <person name="Wu Y."/>
            <person name="Dumenil J."/>
            <person name="Zhu Z."/>
            <person name="Bevan M.W."/>
            <person name="Li Y."/>
        </authorList>
    </citation>
    <scope>FUNCTION</scope>
    <scope>INTERACTION WITH UBIQUITIN; TCP14 AND TCP15</scope>
    <scope>DOMAIN</scope>
</reference>
<reference key="8">
    <citation type="journal article" date="2017" name="Genes Dev.">
        <title>Ubiquitylation activates a peptidase that promotes cleavage and destabilization of its activating E3 ligases and diverse growth regulatory proteins to limit cell proliferation in Arabidopsis.</title>
        <authorList>
            <person name="Dong H."/>
            <person name="Dumenil J."/>
            <person name="Lu F.H."/>
            <person name="Na L."/>
            <person name="Vanhaeren H."/>
            <person name="Naumann C."/>
            <person name="Klecker M."/>
            <person name="Prior R."/>
            <person name="Smith C."/>
            <person name="McKenzie N."/>
            <person name="Saalbach G."/>
            <person name="Chen L."/>
            <person name="Xia T."/>
            <person name="Gonzalez N."/>
            <person name="Seguela M."/>
            <person name="Inze D."/>
            <person name="Dissmeyer N."/>
            <person name="Li Y."/>
            <person name="Bevan M.W."/>
        </authorList>
    </citation>
    <scope>FUNCTION</scope>
    <scope>UBIQUITINATION AT LYS-95; LYS-221; LYS-348; LYS-376; LYS-381; LYS-391; LYS-474; LYS-475 AND LYS-519</scope>
    <scope>IDENTIFICATION BY MASS SPECTROMETRY</scope>
    <scope>INTERACTION WITH BB</scope>
    <scope>DOMAIN</scope>
    <scope>MUTAGENESIS OF ALA-77; SER-81; ALA-109; SER-113; HIS-418 AND HIS-422</scope>
</reference>
<reference key="9">
    <citation type="journal article" date="2017" name="Plant Physiol.">
        <title>Forever young: the role of ubiquitin receptor DA1 and E3 ligase BIG BROTHER in controlling leaf growth and development.</title>
        <authorList>
            <person name="Vanhaeren H."/>
            <person name="Nam Y.J."/>
            <person name="De Milde L."/>
            <person name="Chae E."/>
            <person name="Storme V."/>
            <person name="Weigel D."/>
            <person name="Gonzalez N."/>
            <person name="Inze D."/>
        </authorList>
    </citation>
    <scope>FUNCTION</scope>
</reference>
<accession>P0C7Q8</accession>
<accession>Q9LM99</accession>
<organism>
    <name type="scientific">Arabidopsis thaliana</name>
    <name type="common">Mouse-ear cress</name>
    <dbReference type="NCBI Taxonomy" id="3702"/>
    <lineage>
        <taxon>Eukaryota</taxon>
        <taxon>Viridiplantae</taxon>
        <taxon>Streptophyta</taxon>
        <taxon>Embryophyta</taxon>
        <taxon>Tracheophyta</taxon>
        <taxon>Spermatophyta</taxon>
        <taxon>Magnoliopsida</taxon>
        <taxon>eudicotyledons</taxon>
        <taxon>Gunneridae</taxon>
        <taxon>Pentapetalae</taxon>
        <taxon>rosids</taxon>
        <taxon>malvids</taxon>
        <taxon>Brassicales</taxon>
        <taxon>Brassicaceae</taxon>
        <taxon>Camelineae</taxon>
        <taxon>Arabidopsis</taxon>
    </lineage>
</organism>
<dbReference type="EMBL" id="AC069143">
    <property type="protein sequence ID" value="AAF82237.1"/>
    <property type="status" value="ALT_SEQ"/>
    <property type="molecule type" value="Genomic_DNA"/>
</dbReference>
<dbReference type="EMBL" id="CP002684">
    <property type="protein sequence ID" value="AEE29825.1"/>
    <property type="molecule type" value="Genomic_DNA"/>
</dbReference>
<dbReference type="EMBL" id="CP002684">
    <property type="protein sequence ID" value="ANM58072.1"/>
    <property type="molecule type" value="Genomic_DNA"/>
</dbReference>
<dbReference type="EMBL" id="BX816571">
    <property type="status" value="NOT_ANNOTATED_CDS"/>
    <property type="molecule type" value="mRNA"/>
</dbReference>
<dbReference type="PIR" id="D86326">
    <property type="entry name" value="D86326"/>
</dbReference>
<dbReference type="RefSeq" id="NP_001320535.1">
    <property type="nucleotide sequence ID" value="NM_001332389.1"/>
</dbReference>
<dbReference type="RefSeq" id="NP_173361.1">
    <property type="nucleotide sequence ID" value="NM_101785.4"/>
</dbReference>
<dbReference type="BioGRID" id="23749">
    <property type="interactions" value="14"/>
</dbReference>
<dbReference type="FunCoup" id="P0C7Q8">
    <property type="interactions" value="182"/>
</dbReference>
<dbReference type="IntAct" id="P0C7Q8">
    <property type="interactions" value="11"/>
</dbReference>
<dbReference type="STRING" id="3702.P0C7Q8"/>
<dbReference type="iPTMnet" id="P0C7Q8"/>
<dbReference type="PaxDb" id="3702-AT1G19270.1"/>
<dbReference type="ProteomicsDB" id="224704"/>
<dbReference type="EnsemblPlants" id="AT1G19270.1">
    <property type="protein sequence ID" value="AT1G19270.1"/>
    <property type="gene ID" value="AT1G19270"/>
</dbReference>
<dbReference type="EnsemblPlants" id="AT1G19270.2">
    <property type="protein sequence ID" value="AT1G19270.2"/>
    <property type="gene ID" value="AT1G19270"/>
</dbReference>
<dbReference type="GeneID" id="838510"/>
<dbReference type="Gramene" id="AT1G19270.1">
    <property type="protein sequence ID" value="AT1G19270.1"/>
    <property type="gene ID" value="AT1G19270"/>
</dbReference>
<dbReference type="Gramene" id="AT1G19270.2">
    <property type="protein sequence ID" value="AT1G19270.2"/>
    <property type="gene ID" value="AT1G19270"/>
</dbReference>
<dbReference type="KEGG" id="ath:AT1G19270"/>
<dbReference type="Araport" id="AT1G19270"/>
<dbReference type="TAIR" id="AT1G19270">
    <property type="gene designation" value="DA1"/>
</dbReference>
<dbReference type="eggNOG" id="KOG1703">
    <property type="taxonomic scope" value="Eukaryota"/>
</dbReference>
<dbReference type="HOGENOM" id="CLU_015906_4_0_1"/>
<dbReference type="InParanoid" id="P0C7Q8"/>
<dbReference type="OMA" id="ADNDEPH"/>
<dbReference type="OrthoDB" id="25414at2759"/>
<dbReference type="PhylomeDB" id="P0C7Q8"/>
<dbReference type="PRO" id="PR:P0C7Q8"/>
<dbReference type="Proteomes" id="UP000006548">
    <property type="component" value="Chromosome 1"/>
</dbReference>
<dbReference type="ExpressionAtlas" id="P0C7Q8">
    <property type="expression patterns" value="baseline and differential"/>
</dbReference>
<dbReference type="GO" id="GO:0046872">
    <property type="term" value="F:metal ion binding"/>
    <property type="evidence" value="ECO:0007669"/>
    <property type="project" value="UniProtKB-KW"/>
</dbReference>
<dbReference type="GO" id="GO:0008233">
    <property type="term" value="F:peptidase activity"/>
    <property type="evidence" value="ECO:0000314"/>
    <property type="project" value="TAIR"/>
</dbReference>
<dbReference type="GO" id="GO:0043130">
    <property type="term" value="F:ubiquitin binding"/>
    <property type="evidence" value="ECO:0000314"/>
    <property type="project" value="UniProtKB"/>
</dbReference>
<dbReference type="GO" id="GO:0008285">
    <property type="term" value="P:negative regulation of cell population proliferation"/>
    <property type="evidence" value="ECO:0000315"/>
    <property type="project" value="TAIR"/>
</dbReference>
<dbReference type="GO" id="GO:0046621">
    <property type="term" value="P:negative regulation of organ growth"/>
    <property type="evidence" value="ECO:0000315"/>
    <property type="project" value="TAIR"/>
</dbReference>
<dbReference type="GO" id="GO:0048482">
    <property type="term" value="P:plant ovule morphogenesis"/>
    <property type="evidence" value="ECO:0000315"/>
    <property type="project" value="TAIR"/>
</dbReference>
<dbReference type="GO" id="GO:1900057">
    <property type="term" value="P:positive regulation of leaf senescence"/>
    <property type="evidence" value="ECO:0000315"/>
    <property type="project" value="TAIR"/>
</dbReference>
<dbReference type="GO" id="GO:0032875">
    <property type="term" value="P:regulation of DNA endoreduplication"/>
    <property type="evidence" value="ECO:0000315"/>
    <property type="project" value="UniProtKB"/>
</dbReference>
<dbReference type="GO" id="GO:0046620">
    <property type="term" value="P:regulation of organ growth"/>
    <property type="evidence" value="ECO:0000315"/>
    <property type="project" value="UniProtKB"/>
</dbReference>
<dbReference type="GO" id="GO:0080113">
    <property type="term" value="P:regulation of seed growth"/>
    <property type="evidence" value="ECO:0000315"/>
    <property type="project" value="UniProtKB"/>
</dbReference>
<dbReference type="GO" id="GO:0048317">
    <property type="term" value="P:seed morphogenesis"/>
    <property type="evidence" value="ECO:0000315"/>
    <property type="project" value="TAIR"/>
</dbReference>
<dbReference type="CDD" id="cd09396">
    <property type="entry name" value="LIM_DA1"/>
    <property type="match status" value="1"/>
</dbReference>
<dbReference type="FunFam" id="2.10.110.10:FF:000078">
    <property type="entry name" value="Protein DA1-related 1"/>
    <property type="match status" value="1"/>
</dbReference>
<dbReference type="Gene3D" id="2.10.110.10">
    <property type="entry name" value="Cysteine Rich Protein"/>
    <property type="match status" value="1"/>
</dbReference>
<dbReference type="InterPro" id="IPR045218">
    <property type="entry name" value="DA1-like"/>
</dbReference>
<dbReference type="InterPro" id="IPR022087">
    <property type="entry name" value="DA1-like_dom"/>
</dbReference>
<dbReference type="InterPro" id="IPR003903">
    <property type="entry name" value="UIM_dom"/>
</dbReference>
<dbReference type="InterPro" id="IPR001781">
    <property type="entry name" value="Znf_LIM"/>
</dbReference>
<dbReference type="PANTHER" id="PTHR24209:SF29">
    <property type="entry name" value="PROTEIN DA1"/>
    <property type="match status" value="1"/>
</dbReference>
<dbReference type="PANTHER" id="PTHR24209">
    <property type="entry name" value="PROTEIN DA1-RELATED 2"/>
    <property type="match status" value="1"/>
</dbReference>
<dbReference type="Pfam" id="PF12315">
    <property type="entry name" value="DA1-like"/>
    <property type="match status" value="1"/>
</dbReference>
<dbReference type="Pfam" id="PF00412">
    <property type="entry name" value="LIM"/>
    <property type="match status" value="1"/>
</dbReference>
<dbReference type="Pfam" id="PF23625">
    <property type="entry name" value="UIM_2"/>
    <property type="match status" value="2"/>
</dbReference>
<dbReference type="SMART" id="SM00132">
    <property type="entry name" value="LIM"/>
    <property type="match status" value="1"/>
</dbReference>
<dbReference type="SMART" id="SM00726">
    <property type="entry name" value="UIM"/>
    <property type="match status" value="2"/>
</dbReference>
<dbReference type="SUPFAM" id="SSF57716">
    <property type="entry name" value="Glucocorticoid receptor-like (DNA-binding domain)"/>
    <property type="match status" value="1"/>
</dbReference>
<dbReference type="PROSITE" id="PS00478">
    <property type="entry name" value="LIM_DOMAIN_1"/>
    <property type="match status" value="1"/>
</dbReference>
<dbReference type="PROSITE" id="PS50023">
    <property type="entry name" value="LIM_DOMAIN_2"/>
    <property type="match status" value="1"/>
</dbReference>
<dbReference type="PROSITE" id="PS50330">
    <property type="entry name" value="UIM"/>
    <property type="match status" value="2"/>
</dbReference>
<dbReference type="PROSITE" id="PS00142">
    <property type="entry name" value="ZINC_PROTEASE"/>
    <property type="match status" value="1"/>
</dbReference>
<protein>
    <recommendedName>
        <fullName>Protein DA1</fullName>
    </recommendedName>
    <alternativeName>
        <fullName>Protein SUPPRESSOR OF LARGE SEED AND ORGAN PHENOTYPES OF DA1-1 1</fullName>
    </alternativeName>
</protein>
<feature type="chain" id="PRO_0000342698" description="Protein DA1">
    <location>
        <begin position="1"/>
        <end position="532"/>
    </location>
</feature>
<feature type="domain" description="UIM 1" evidence="2">
    <location>
        <begin position="69"/>
        <end position="88"/>
    </location>
</feature>
<feature type="domain" description="UIM 2" evidence="2">
    <location>
        <begin position="101"/>
        <end position="120"/>
    </location>
</feature>
<feature type="domain" description="LIM zinc-binding" evidence="1">
    <location>
        <begin position="170"/>
        <end position="230"/>
    </location>
</feature>
<feature type="region of interest" description="Disordered" evidence="3">
    <location>
        <begin position="26"/>
        <end position="71"/>
    </location>
</feature>
<feature type="compositionally biased region" description="Polar residues" evidence="3">
    <location>
        <begin position="57"/>
        <end position="68"/>
    </location>
</feature>
<feature type="cross-link" description="Glycyl lysine isopeptide (Lys-Gly) (interchain with G-Cter in ubiquitin)" evidence="9">
    <location>
        <position position="95"/>
    </location>
</feature>
<feature type="cross-link" description="Glycyl lysine isopeptide (Lys-Gly) (interchain with G-Cter in ubiquitin)" evidence="9">
    <location>
        <position position="221"/>
    </location>
</feature>
<feature type="cross-link" description="Glycyl lysine isopeptide (Lys-Gly) (interchain with G-Cter in ubiquitin)" evidence="9">
    <location>
        <position position="348"/>
    </location>
</feature>
<feature type="cross-link" description="Glycyl lysine isopeptide (Lys-Gly) (interchain with G-Cter in ubiquitin)" evidence="9">
    <location>
        <position position="376"/>
    </location>
</feature>
<feature type="cross-link" description="Glycyl lysine isopeptide (Lys-Gly) (interchain with G-Cter in ubiquitin)" evidence="9">
    <location>
        <position position="381"/>
    </location>
</feature>
<feature type="cross-link" description="Glycyl lysine isopeptide (Lys-Gly) (interchain with G-Cter in ubiquitin)" evidence="9">
    <location>
        <position position="391"/>
    </location>
</feature>
<feature type="cross-link" description="Glycyl lysine isopeptide (Lys-Gly) (interchain with G-Cter in ubiquitin)" evidence="9">
    <location>
        <position position="474"/>
    </location>
</feature>
<feature type="cross-link" description="Glycyl lysine isopeptide (Lys-Gly) (interchain with G-Cter in ubiquitin)" evidence="9">
    <location>
        <position position="475"/>
    </location>
</feature>
<feature type="cross-link" description="Glycyl lysine isopeptide (Lys-Gly) (interchain with G-Cter in ubiquitin)" evidence="9">
    <location>
        <position position="519"/>
    </location>
</feature>
<feature type="mutagenesis site" description="No effect on ubiquitin binding; when associated with G-81." evidence="9">
    <original>A</original>
    <variation>G</variation>
    <location>
        <position position="77"/>
    </location>
</feature>
<feature type="mutagenesis site" description="No effect on ubiquitin binding; when associated with G-77." evidence="9">
    <original>S</original>
    <variation>G</variation>
    <location>
        <position position="81"/>
    </location>
</feature>
<feature type="mutagenesis site" description="Abolishes binding of ubiquitin; when associated with G-113." evidence="9">
    <original>A</original>
    <variation>G</variation>
    <location>
        <position position="109"/>
    </location>
</feature>
<feature type="mutagenesis site" description="Abolishes binding of ubiquitin; when associated with G-109." evidence="9">
    <original>S</original>
    <variation>G</variation>
    <location>
        <position position="113"/>
    </location>
</feature>
<feature type="mutagenesis site" description="In da1-1; increased seed and organ size mainly due to altered numbers of normally sized cells, negative activity toward DA1 and DAR1, but normal fertility. Suppression of large seed and organ phenotypes of da1-1; when associated with F-362." evidence="4">
    <original>R</original>
    <variation>K</variation>
    <location>
        <position position="358"/>
    </location>
</feature>
<feature type="mutagenesis site" description="In sod1-1; suppression of large seed and organ phenotypes of da1-1; when associated with K-358." evidence="4">
    <original>L</original>
    <variation>F</variation>
    <location>
        <position position="362"/>
    </location>
</feature>
<feature type="mutagenesis site" description="Abolishes peptidase activity; when associated with A-422." evidence="9">
    <original>H</original>
    <variation>A</variation>
    <location>
        <position position="418"/>
    </location>
</feature>
<feature type="mutagenesis site" description="Abolishes peptidase activity; when associated with A-418." evidence="9">
    <original>H</original>
    <variation>A</variation>
    <location>
        <position position="422"/>
    </location>
</feature>
<feature type="sequence conflict" description="In Ref. 3; BX816571." evidence="11" ref="3">
    <original>Q</original>
    <variation>S</variation>
    <location>
        <position position="443"/>
    </location>
</feature>
<name>DA1_ARATH</name>
<gene>
    <name type="primary">DA1</name>
    <name type="synonym">SOD1</name>
    <name type="ordered locus">At1g19270</name>
    <name type="ORF">T29M8.14</name>
</gene>
<sequence>MGWFNKIFKGSNQRLRVGNNKHNHNVYYDNYPTASHDDEPSAADTDADNDEPHHTQEPSTSEDNTSNDQENEDIDRAIALSLLEENQEQTSISGKYSMPVDEDEQLARALQESMVVGNSPRHKSGSTYDNGNAYGAGDLYGNGHMYGGGNVYANGDIYYPRPITFQMDFRICAGCNMEIGHGRFLNCLNSLWHPECFRCYGCSQPISEYEFSTSGNYPFHKACYRERYHPKCDVCSHFIPTNHAGLIEYRAHPFWVQKYCPSHEHDATPRCCSCERMEPRNTRYVELNDGRKLCLECLDSAVMDTMQCQPLYLQIQNFYEGLNMKVEQEVPLLLVERQALNEAREGEKNGHYHMPETRGLCLSEEQTVSTVRKRSKHGTGKWAGNITEPYKLTRQCEVTAILILFGLPRLLTGSILAHEMMHAWMRLKGFRTLSQDVEEGICQVMAHKWLDAELAAGSTNSNAASSSSSSQGLKKGPRSQYERKLGEFFKHQIESDASPVYGDGFRAGRLAVHKYGLRKTLEHIQMTGRFPV</sequence>
<comment type="function">
    <text evidence="4 5 6 7 8 9">Ubiquitin receptor that limits final seed and organ size by restricting the period of cell proliferation. May act maternally to control seed mass (PubMed:18483219, PubMed:24045020). Acts synergistically with DA2 to regulate seed size. Functions synergistically with DA2 to restrict cell proliferation in the maternal integuments of ovules and developing seeds (PubMed:24045020). Functions antagonistically in a common pathway with UBP15 to regulate seed size. Associates physically with UBP15 and modulates the stability of UBP15, which promote cell proliferation in the integuments of ovules and developing seeds (PubMed:24585836). Functions as a peptidase and cleaves the N-terminal sequence of E3 ubiquitin-protein ligases BB and DA2 in a ubiquitin-dependent manner. Cleaves the deubiquitinating enzyme UBP15, which promotes cell proliferation, and the transcription factors TCP15 and TCP22, which promote cell proliferation and repress endoreduplication (PubMed:28167503). Involved in the promotion of leaf senescence, in addition to its function in restricting plant growth (PubMed:28003326). Acts redundantly with DAR1 and DAR2 to regulate endoreduplication during leaf development. Together with DAR1 and DAR2, modulates the protein stability of the transcription factors TCP14 and TCP15, which repress endoreduplication by directly regulating the expression of cell-cycle genes (PubMed:25757472).</text>
</comment>
<comment type="subunit">
    <text evidence="4 5 6 7 9">Interacts with ubiquitin (PubMed:18483219, PubMed:25757472). Interacts (via C-terminus) with DA2 (PubMed:24045020). Interacts with BB (PubMed:28167503). Interacts with UBP15 (PubMed:24585836). Interacts with TCP14 and TCP15 (PubMed:25757472).</text>
</comment>
<comment type="developmental stage">
    <text evidence="4">Highly expressed during the early stages of leaf, petal, integument, and embryo formation and fade away later in petal and leaf development.</text>
</comment>
<comment type="induction">
    <text evidence="4">Induced by abscisic acid (ABA).</text>
</comment>
<comment type="domain">
    <text evidence="12 13">The UIM domains bind molecules modified by monoubiquitin or ubiquitin chains and promote coupled monoubiquitination.</text>
</comment>
<comment type="PTM">
    <text evidence="9">Ubiquitinated at Lys-95, Lys-221, Lys-348, Lys-376, Lys-381, Lys-391, Lys-474, Lys-475 and Lys-519 by the E3 ubiquitin-protein ligases BB and DA2.</text>
</comment>
<comment type="disruption phenotype">
    <text evidence="4">No visible phenotype.</text>
</comment>
<comment type="miscellaneous">
    <text evidence="8 10">'Da' means 'large' in Chinese (PubMed:18483219). Plants overexpressing DA1 exhibit early senescence (PubMed:28003326).</text>
</comment>
<comment type="sequence caution" evidence="11">
    <conflict type="erroneous gene model prediction">
        <sequence resource="EMBL-CDS" id="AAF82237"/>
    </conflict>
    <text>The predicted gene has been split into 2 genes: At1g19270 and At1g19290.</text>
</comment>
<comment type="sequence caution" evidence="11">
    <conflict type="frameshift">
        <sequence resource="EMBL" id="BX816571"/>
    </conflict>
</comment>
<evidence type="ECO:0000255" key="1">
    <source>
        <dbReference type="PROSITE-ProRule" id="PRU00125"/>
    </source>
</evidence>
<evidence type="ECO:0000255" key="2">
    <source>
        <dbReference type="PROSITE-ProRule" id="PRU00213"/>
    </source>
</evidence>
<evidence type="ECO:0000256" key="3">
    <source>
        <dbReference type="SAM" id="MobiDB-lite"/>
    </source>
</evidence>
<evidence type="ECO:0000269" key="4">
    <source>
    </source>
</evidence>
<evidence type="ECO:0000269" key="5">
    <source>
    </source>
</evidence>
<evidence type="ECO:0000269" key="6">
    <source>
    </source>
</evidence>
<evidence type="ECO:0000269" key="7">
    <source>
    </source>
</evidence>
<evidence type="ECO:0000269" key="8">
    <source>
    </source>
</evidence>
<evidence type="ECO:0000269" key="9">
    <source>
    </source>
</evidence>
<evidence type="ECO:0000303" key="10">
    <source>
    </source>
</evidence>
<evidence type="ECO:0000305" key="11"/>
<evidence type="ECO:0000305" key="12">
    <source>
    </source>
</evidence>
<evidence type="ECO:0000305" key="13">
    <source>
    </source>
</evidence>
<proteinExistence type="evidence at protein level"/>